<proteinExistence type="inferred from homology"/>
<organism>
    <name type="scientific">Herminiimonas arsenicoxydans</name>
    <dbReference type="NCBI Taxonomy" id="204773"/>
    <lineage>
        <taxon>Bacteria</taxon>
        <taxon>Pseudomonadati</taxon>
        <taxon>Pseudomonadota</taxon>
        <taxon>Betaproteobacteria</taxon>
        <taxon>Burkholderiales</taxon>
        <taxon>Oxalobacteraceae</taxon>
        <taxon>Herminiimonas</taxon>
    </lineage>
</organism>
<name>SELO_HERAR</name>
<sequence>MNAPIPHAVCHLNDMPLANSFASLPPAHYTALMPTPLPAPYLVCASASAAALIGLDFSDIDSAAFIETFTGNRIPDGSRPLSAVYSGHQFGVWAGQLGDGRAILLGDVPAPTMIPSGRLELQLKGAGLTPYSRMGDGRAVLRSSIREFLCSEAMAALGIPTTRALCVTGSDQIVLREQRETAAVATRMAQSFVRFGSFEHWFYNEKHDELKTLADYVIAQFYPQFKTAENPYKALLTEVTLRTAQMIAHWQAVGFMHGVMNTDNMSILGLTLDYGPFGFMEAFNATHICNHTDQQGRYSYARQPQIGEWNCYALGQTLLPLIGDVDETQNALRIYKPAYAEKFAELMRAKLGLQTQQPDDGKLFDALFAVLQGSHADFTLFFRRLGELRIGQAASREALRDLFLDRAAFDDWALQYELRLQLENSDDDARKLAMHAVNPKYVLRNYLAQIAIEKAQNKDFSEVAKLLQVLEKPFDEQPENEKYAALPPDWANDLEVSCSS</sequence>
<comment type="function">
    <text evidence="1">Nucleotidyltransferase involved in the post-translational modification of proteins. It can catalyze the addition of adenosine monophosphate (AMP) or uridine monophosphate (UMP) to a protein, resulting in modifications known as AMPylation and UMPylation.</text>
</comment>
<comment type="catalytic activity">
    <reaction evidence="1">
        <text>L-seryl-[protein] + ATP = 3-O-(5'-adenylyl)-L-seryl-[protein] + diphosphate</text>
        <dbReference type="Rhea" id="RHEA:58120"/>
        <dbReference type="Rhea" id="RHEA-COMP:9863"/>
        <dbReference type="Rhea" id="RHEA-COMP:15073"/>
        <dbReference type="ChEBI" id="CHEBI:29999"/>
        <dbReference type="ChEBI" id="CHEBI:30616"/>
        <dbReference type="ChEBI" id="CHEBI:33019"/>
        <dbReference type="ChEBI" id="CHEBI:142516"/>
        <dbReference type="EC" id="2.7.7.108"/>
    </reaction>
</comment>
<comment type="catalytic activity">
    <reaction evidence="1">
        <text>L-threonyl-[protein] + ATP = 3-O-(5'-adenylyl)-L-threonyl-[protein] + diphosphate</text>
        <dbReference type="Rhea" id="RHEA:54292"/>
        <dbReference type="Rhea" id="RHEA-COMP:11060"/>
        <dbReference type="Rhea" id="RHEA-COMP:13847"/>
        <dbReference type="ChEBI" id="CHEBI:30013"/>
        <dbReference type="ChEBI" id="CHEBI:30616"/>
        <dbReference type="ChEBI" id="CHEBI:33019"/>
        <dbReference type="ChEBI" id="CHEBI:138113"/>
        <dbReference type="EC" id="2.7.7.108"/>
    </reaction>
</comment>
<comment type="catalytic activity">
    <reaction evidence="1">
        <text>L-tyrosyl-[protein] + ATP = O-(5'-adenylyl)-L-tyrosyl-[protein] + diphosphate</text>
        <dbReference type="Rhea" id="RHEA:54288"/>
        <dbReference type="Rhea" id="RHEA-COMP:10136"/>
        <dbReference type="Rhea" id="RHEA-COMP:13846"/>
        <dbReference type="ChEBI" id="CHEBI:30616"/>
        <dbReference type="ChEBI" id="CHEBI:33019"/>
        <dbReference type="ChEBI" id="CHEBI:46858"/>
        <dbReference type="ChEBI" id="CHEBI:83624"/>
        <dbReference type="EC" id="2.7.7.108"/>
    </reaction>
</comment>
<comment type="catalytic activity">
    <reaction evidence="1">
        <text>L-histidyl-[protein] + UTP = N(tele)-(5'-uridylyl)-L-histidyl-[protein] + diphosphate</text>
        <dbReference type="Rhea" id="RHEA:83891"/>
        <dbReference type="Rhea" id="RHEA-COMP:9745"/>
        <dbReference type="Rhea" id="RHEA-COMP:20239"/>
        <dbReference type="ChEBI" id="CHEBI:29979"/>
        <dbReference type="ChEBI" id="CHEBI:33019"/>
        <dbReference type="ChEBI" id="CHEBI:46398"/>
        <dbReference type="ChEBI" id="CHEBI:233474"/>
    </reaction>
</comment>
<comment type="catalytic activity">
    <reaction evidence="1">
        <text>L-seryl-[protein] + UTP = O-(5'-uridylyl)-L-seryl-[protein] + diphosphate</text>
        <dbReference type="Rhea" id="RHEA:64604"/>
        <dbReference type="Rhea" id="RHEA-COMP:9863"/>
        <dbReference type="Rhea" id="RHEA-COMP:16635"/>
        <dbReference type="ChEBI" id="CHEBI:29999"/>
        <dbReference type="ChEBI" id="CHEBI:33019"/>
        <dbReference type="ChEBI" id="CHEBI:46398"/>
        <dbReference type="ChEBI" id="CHEBI:156051"/>
    </reaction>
</comment>
<comment type="catalytic activity">
    <reaction evidence="1">
        <text>L-tyrosyl-[protein] + UTP = O-(5'-uridylyl)-L-tyrosyl-[protein] + diphosphate</text>
        <dbReference type="Rhea" id="RHEA:83887"/>
        <dbReference type="Rhea" id="RHEA-COMP:10136"/>
        <dbReference type="Rhea" id="RHEA-COMP:20238"/>
        <dbReference type="ChEBI" id="CHEBI:33019"/>
        <dbReference type="ChEBI" id="CHEBI:46398"/>
        <dbReference type="ChEBI" id="CHEBI:46858"/>
        <dbReference type="ChEBI" id="CHEBI:90602"/>
    </reaction>
</comment>
<comment type="cofactor">
    <cofactor evidence="1">
        <name>Mg(2+)</name>
        <dbReference type="ChEBI" id="CHEBI:18420"/>
    </cofactor>
    <cofactor evidence="1">
        <name>Mn(2+)</name>
        <dbReference type="ChEBI" id="CHEBI:29035"/>
    </cofactor>
</comment>
<comment type="similarity">
    <text evidence="1">Belongs to the SELO family.</text>
</comment>
<accession>A4G5V4</accession>
<evidence type="ECO:0000255" key="1">
    <source>
        <dbReference type="HAMAP-Rule" id="MF_00692"/>
    </source>
</evidence>
<reference key="1">
    <citation type="journal article" date="2007" name="PLoS Genet.">
        <title>A tale of two oxidation states: bacterial colonization of arsenic-rich environments.</title>
        <authorList>
            <person name="Muller D."/>
            <person name="Medigue C."/>
            <person name="Koechler S."/>
            <person name="Barbe V."/>
            <person name="Barakat M."/>
            <person name="Talla E."/>
            <person name="Bonnefoy V."/>
            <person name="Krin E."/>
            <person name="Arsene-Ploetze F."/>
            <person name="Carapito C."/>
            <person name="Chandler M."/>
            <person name="Cournoyer B."/>
            <person name="Cruveiller S."/>
            <person name="Dossat C."/>
            <person name="Duval S."/>
            <person name="Heymann M."/>
            <person name="Leize E."/>
            <person name="Lieutaud A."/>
            <person name="Lievremont D."/>
            <person name="Makita Y."/>
            <person name="Mangenot S."/>
            <person name="Nitschke W."/>
            <person name="Ortet P."/>
            <person name="Perdrial N."/>
            <person name="Schoepp B."/>
            <person name="Siguier P."/>
            <person name="Simeonova D.D."/>
            <person name="Rouy Z."/>
            <person name="Segurens B."/>
            <person name="Turlin E."/>
            <person name="Vallenet D."/>
            <person name="van Dorsselaer A."/>
            <person name="Weiss S."/>
            <person name="Weissenbach J."/>
            <person name="Lett M.-C."/>
            <person name="Danchin A."/>
            <person name="Bertin P.N."/>
        </authorList>
    </citation>
    <scope>NUCLEOTIDE SEQUENCE [LARGE SCALE GENOMIC DNA]</scope>
    <source>
        <strain>ULPAs1</strain>
    </source>
</reference>
<protein>
    <recommendedName>
        <fullName evidence="1">Protein nucleotidyltransferase YdiU</fullName>
        <ecNumber evidence="1">2.7.7.-</ecNumber>
    </recommendedName>
    <alternativeName>
        <fullName evidence="1">Protein adenylyltransferase YdiU</fullName>
        <ecNumber evidence="1">2.7.7.108</ecNumber>
    </alternativeName>
    <alternativeName>
        <fullName evidence="1">Protein uridylyltransferase YdiU</fullName>
        <ecNumber evidence="1">2.7.7.-</ecNumber>
    </alternativeName>
</protein>
<dbReference type="EC" id="2.7.7.-" evidence="1"/>
<dbReference type="EC" id="2.7.7.108" evidence="1"/>
<dbReference type="EMBL" id="CU207211">
    <property type="protein sequence ID" value="CAL61891.1"/>
    <property type="molecule type" value="Genomic_DNA"/>
</dbReference>
<dbReference type="SMR" id="A4G5V4"/>
<dbReference type="STRING" id="204773.HEAR1735"/>
<dbReference type="KEGG" id="har:HEAR1735"/>
<dbReference type="eggNOG" id="COG0397">
    <property type="taxonomic scope" value="Bacteria"/>
</dbReference>
<dbReference type="HOGENOM" id="CLU_010245_4_0_4"/>
<dbReference type="OrthoDB" id="9776281at2"/>
<dbReference type="Proteomes" id="UP000006697">
    <property type="component" value="Chromosome"/>
</dbReference>
<dbReference type="GO" id="GO:0070733">
    <property type="term" value="F:AMPylase activity"/>
    <property type="evidence" value="ECO:0007669"/>
    <property type="project" value="RHEA"/>
</dbReference>
<dbReference type="GO" id="GO:0005524">
    <property type="term" value="F:ATP binding"/>
    <property type="evidence" value="ECO:0007669"/>
    <property type="project" value="UniProtKB-UniRule"/>
</dbReference>
<dbReference type="GO" id="GO:0000287">
    <property type="term" value="F:magnesium ion binding"/>
    <property type="evidence" value="ECO:0007669"/>
    <property type="project" value="UniProtKB-UniRule"/>
</dbReference>
<dbReference type="HAMAP" id="MF_00692">
    <property type="entry name" value="YdiU_SelO"/>
    <property type="match status" value="1"/>
</dbReference>
<dbReference type="InterPro" id="IPR003846">
    <property type="entry name" value="SelO"/>
</dbReference>
<dbReference type="NCBIfam" id="NF000658">
    <property type="entry name" value="PRK00029.1"/>
    <property type="match status" value="1"/>
</dbReference>
<dbReference type="PANTHER" id="PTHR32057">
    <property type="entry name" value="PROTEIN ADENYLYLTRANSFERASE SELO, MITOCHONDRIAL"/>
    <property type="match status" value="1"/>
</dbReference>
<dbReference type="PANTHER" id="PTHR32057:SF14">
    <property type="entry name" value="PROTEIN ADENYLYLTRANSFERASE SELO, MITOCHONDRIAL"/>
    <property type="match status" value="1"/>
</dbReference>
<dbReference type="Pfam" id="PF02696">
    <property type="entry name" value="SelO"/>
    <property type="match status" value="1"/>
</dbReference>
<feature type="chain" id="PRO_1000045248" description="Protein nucleotidyltransferase YdiU">
    <location>
        <begin position="1"/>
        <end position="500"/>
    </location>
</feature>
<feature type="active site" description="Proton acceptor" evidence="1">
    <location>
        <position position="263"/>
    </location>
</feature>
<feature type="binding site" evidence="1">
    <location>
        <position position="98"/>
    </location>
    <ligand>
        <name>ATP</name>
        <dbReference type="ChEBI" id="CHEBI:30616"/>
    </ligand>
</feature>
<feature type="binding site" evidence="1">
    <location>
        <position position="100"/>
    </location>
    <ligand>
        <name>ATP</name>
        <dbReference type="ChEBI" id="CHEBI:30616"/>
    </ligand>
</feature>
<feature type="binding site" evidence="1">
    <location>
        <position position="101"/>
    </location>
    <ligand>
        <name>ATP</name>
        <dbReference type="ChEBI" id="CHEBI:30616"/>
    </ligand>
</feature>
<feature type="binding site" evidence="1">
    <location>
        <position position="124"/>
    </location>
    <ligand>
        <name>ATP</name>
        <dbReference type="ChEBI" id="CHEBI:30616"/>
    </ligand>
</feature>
<feature type="binding site" evidence="1">
    <location>
        <position position="136"/>
    </location>
    <ligand>
        <name>ATP</name>
        <dbReference type="ChEBI" id="CHEBI:30616"/>
    </ligand>
</feature>
<feature type="binding site" evidence="1">
    <location>
        <position position="137"/>
    </location>
    <ligand>
        <name>ATP</name>
        <dbReference type="ChEBI" id="CHEBI:30616"/>
    </ligand>
</feature>
<feature type="binding site" evidence="1">
    <location>
        <position position="187"/>
    </location>
    <ligand>
        <name>ATP</name>
        <dbReference type="ChEBI" id="CHEBI:30616"/>
    </ligand>
</feature>
<feature type="binding site" evidence="1">
    <location>
        <position position="194"/>
    </location>
    <ligand>
        <name>ATP</name>
        <dbReference type="ChEBI" id="CHEBI:30616"/>
    </ligand>
</feature>
<feature type="binding site" evidence="1">
    <location>
        <position position="264"/>
    </location>
    <ligand>
        <name>Mg(2+)</name>
        <dbReference type="ChEBI" id="CHEBI:18420"/>
    </ligand>
</feature>
<feature type="binding site" evidence="1">
    <location>
        <position position="273"/>
    </location>
    <ligand>
        <name>ATP</name>
        <dbReference type="ChEBI" id="CHEBI:30616"/>
    </ligand>
</feature>
<feature type="binding site" evidence="1">
    <location>
        <position position="273"/>
    </location>
    <ligand>
        <name>Mg(2+)</name>
        <dbReference type="ChEBI" id="CHEBI:18420"/>
    </ligand>
</feature>
<gene>
    <name evidence="1" type="primary">ydiU</name>
    <name evidence="1" type="synonym">selO</name>
    <name type="ordered locus">HEAR1735</name>
</gene>
<keyword id="KW-0067">ATP-binding</keyword>
<keyword id="KW-0460">Magnesium</keyword>
<keyword id="KW-0464">Manganese</keyword>
<keyword id="KW-0479">Metal-binding</keyword>
<keyword id="KW-0547">Nucleotide-binding</keyword>
<keyword id="KW-0548">Nucleotidyltransferase</keyword>
<keyword id="KW-1185">Reference proteome</keyword>
<keyword id="KW-0808">Transferase</keyword>